<evidence type="ECO:0000255" key="1">
    <source>
        <dbReference type="HAMAP-Rule" id="MF_00081"/>
    </source>
</evidence>
<dbReference type="EMBL" id="CP001013">
    <property type="protein sequence ID" value="ACB35741.1"/>
    <property type="molecule type" value="Genomic_DNA"/>
</dbReference>
<dbReference type="RefSeq" id="WP_012348488.1">
    <property type="nucleotide sequence ID" value="NC_010524.1"/>
</dbReference>
<dbReference type="SMR" id="B1Y3N8"/>
<dbReference type="STRING" id="395495.Lcho_3487"/>
<dbReference type="KEGG" id="lch:Lcho_3487"/>
<dbReference type="eggNOG" id="COG1420">
    <property type="taxonomic scope" value="Bacteria"/>
</dbReference>
<dbReference type="HOGENOM" id="CLU_050019_0_0_4"/>
<dbReference type="OrthoDB" id="9783139at2"/>
<dbReference type="Proteomes" id="UP000001693">
    <property type="component" value="Chromosome"/>
</dbReference>
<dbReference type="GO" id="GO:0003677">
    <property type="term" value="F:DNA binding"/>
    <property type="evidence" value="ECO:0007669"/>
    <property type="project" value="InterPro"/>
</dbReference>
<dbReference type="GO" id="GO:0045892">
    <property type="term" value="P:negative regulation of DNA-templated transcription"/>
    <property type="evidence" value="ECO:0007669"/>
    <property type="project" value="UniProtKB-UniRule"/>
</dbReference>
<dbReference type="Gene3D" id="3.30.450.40">
    <property type="match status" value="1"/>
</dbReference>
<dbReference type="Gene3D" id="1.10.10.10">
    <property type="entry name" value="Winged helix-like DNA-binding domain superfamily/Winged helix DNA-binding domain"/>
    <property type="match status" value="1"/>
</dbReference>
<dbReference type="HAMAP" id="MF_00081">
    <property type="entry name" value="HrcA"/>
    <property type="match status" value="1"/>
</dbReference>
<dbReference type="InterPro" id="IPR029016">
    <property type="entry name" value="GAF-like_dom_sf"/>
</dbReference>
<dbReference type="InterPro" id="IPR002571">
    <property type="entry name" value="HrcA"/>
</dbReference>
<dbReference type="InterPro" id="IPR021153">
    <property type="entry name" value="HrcA_C"/>
</dbReference>
<dbReference type="InterPro" id="IPR036388">
    <property type="entry name" value="WH-like_DNA-bd_sf"/>
</dbReference>
<dbReference type="InterPro" id="IPR036390">
    <property type="entry name" value="WH_DNA-bd_sf"/>
</dbReference>
<dbReference type="InterPro" id="IPR005104">
    <property type="entry name" value="WHTH_HrcA_DNA-bd"/>
</dbReference>
<dbReference type="NCBIfam" id="TIGR00331">
    <property type="entry name" value="hrcA"/>
    <property type="match status" value="1"/>
</dbReference>
<dbReference type="PANTHER" id="PTHR34824">
    <property type="entry name" value="HEAT-INDUCIBLE TRANSCRIPTION REPRESSOR HRCA"/>
    <property type="match status" value="1"/>
</dbReference>
<dbReference type="PANTHER" id="PTHR34824:SF1">
    <property type="entry name" value="HEAT-INDUCIBLE TRANSCRIPTION REPRESSOR HRCA"/>
    <property type="match status" value="1"/>
</dbReference>
<dbReference type="Pfam" id="PF01628">
    <property type="entry name" value="HrcA"/>
    <property type="match status" value="1"/>
</dbReference>
<dbReference type="Pfam" id="PF03444">
    <property type="entry name" value="HrcA_DNA-bdg"/>
    <property type="match status" value="1"/>
</dbReference>
<dbReference type="PIRSF" id="PIRSF005485">
    <property type="entry name" value="HrcA"/>
    <property type="match status" value="1"/>
</dbReference>
<dbReference type="SUPFAM" id="SSF55781">
    <property type="entry name" value="GAF domain-like"/>
    <property type="match status" value="1"/>
</dbReference>
<dbReference type="SUPFAM" id="SSF46785">
    <property type="entry name" value="Winged helix' DNA-binding domain"/>
    <property type="match status" value="1"/>
</dbReference>
<feature type="chain" id="PRO_1000118304" description="Heat-inducible transcription repressor HrcA">
    <location>
        <begin position="1"/>
        <end position="341"/>
    </location>
</feature>
<proteinExistence type="inferred from homology"/>
<sequence length="341" mass="37154">MLDERAKMLLKTLVERYIADGQPVGSRTLSKTSGLELSPATIRNVMSDLEELGLIASPHTSAGRIPTARGYRLFVDSMLTSRAFAREVADTGSAPLLQPDQPKRVIANAAQLLSSLSQFVGVVTVPKKPSVFRHMEFLRLGERRVLLILVSPDGDVQNRVLFTAHDYTQSQLVEATNYLNAHYAGLSIEGVRERLKLEVDALRGEIGTLMQAAVQAGTEAVNEDTEQLIVSGERNLLGVQDFGSDMGSIRKMFDLFEQKTQLLRLLDGSSRADGVRIYIGGESGVVPIEELSVVSAPYEVDGQVVGTLGVIGPTRMAYERMIQIVDITSRLVGNALSQKQG</sequence>
<protein>
    <recommendedName>
        <fullName evidence="1">Heat-inducible transcription repressor HrcA</fullName>
    </recommendedName>
</protein>
<keyword id="KW-1185">Reference proteome</keyword>
<keyword id="KW-0678">Repressor</keyword>
<keyword id="KW-0346">Stress response</keyword>
<keyword id="KW-0804">Transcription</keyword>
<keyword id="KW-0805">Transcription regulation</keyword>
<gene>
    <name evidence="1" type="primary">hrcA</name>
    <name type="ordered locus">Lcho_3487</name>
</gene>
<accession>B1Y3N8</accession>
<comment type="function">
    <text evidence="1">Negative regulator of class I heat shock genes (grpE-dnaK-dnaJ and groELS operons). Prevents heat-shock induction of these operons.</text>
</comment>
<comment type="similarity">
    <text evidence="1">Belongs to the HrcA family.</text>
</comment>
<organism>
    <name type="scientific">Leptothrix cholodnii (strain ATCC 51168 / LMG 8142 / SP-6)</name>
    <name type="common">Leptothrix discophora (strain SP-6)</name>
    <dbReference type="NCBI Taxonomy" id="395495"/>
    <lineage>
        <taxon>Bacteria</taxon>
        <taxon>Pseudomonadati</taxon>
        <taxon>Pseudomonadota</taxon>
        <taxon>Betaproteobacteria</taxon>
        <taxon>Burkholderiales</taxon>
        <taxon>Sphaerotilaceae</taxon>
        <taxon>Leptothrix</taxon>
    </lineage>
</organism>
<reference key="1">
    <citation type="submission" date="2008-03" db="EMBL/GenBank/DDBJ databases">
        <title>Complete sequence of Leptothrix cholodnii SP-6.</title>
        <authorList>
            <consortium name="US DOE Joint Genome Institute"/>
            <person name="Copeland A."/>
            <person name="Lucas S."/>
            <person name="Lapidus A."/>
            <person name="Glavina del Rio T."/>
            <person name="Dalin E."/>
            <person name="Tice H."/>
            <person name="Bruce D."/>
            <person name="Goodwin L."/>
            <person name="Pitluck S."/>
            <person name="Chertkov O."/>
            <person name="Brettin T."/>
            <person name="Detter J.C."/>
            <person name="Han C."/>
            <person name="Kuske C.R."/>
            <person name="Schmutz J."/>
            <person name="Larimer F."/>
            <person name="Land M."/>
            <person name="Hauser L."/>
            <person name="Kyrpides N."/>
            <person name="Lykidis A."/>
            <person name="Emerson D."/>
            <person name="Richardson P."/>
        </authorList>
    </citation>
    <scope>NUCLEOTIDE SEQUENCE [LARGE SCALE GENOMIC DNA]</scope>
    <source>
        <strain>ATCC 51168 / LMG 8142 / SP-6</strain>
    </source>
</reference>
<name>HRCA_LEPCP</name>